<proteinExistence type="inferred from homology"/>
<comment type="function">
    <text evidence="2">Component of the ubiquinol-cytochrome c reductase complex (complex III or cytochrome b-c1 complex) that is part of the mitochondrial respiratory chain. The b-c1 complex mediates electron transfer from ubiquinol to cytochrome c. Contributes to the generation of a proton gradient across the mitochondrial membrane that is then used for ATP synthesis.</text>
</comment>
<comment type="cofactor">
    <cofactor evidence="2">
        <name>heme b</name>
        <dbReference type="ChEBI" id="CHEBI:60344"/>
    </cofactor>
    <text evidence="2">Binds 2 heme b groups non-covalently.</text>
</comment>
<comment type="subunit">
    <text evidence="2">The cytochrome bc1 complex contains 11 subunits: 3 respiratory subunits (MT-CYB, CYC1 and UQCRFS1), 2 core proteins (UQCRC1 and UQCRC2) and 6 low-molecular weight proteins (UQCRH/QCR6, UQCRB/QCR7, UQCRQ/QCR8, UQCR10/QCR9, UQCR11/QCR10 and a cleavage product of UQCRFS1). This cytochrome bc1 complex then forms a dimer.</text>
</comment>
<comment type="subcellular location">
    <subcellularLocation>
        <location evidence="2">Mitochondrion inner membrane</location>
        <topology evidence="2">Multi-pass membrane protein</topology>
    </subcellularLocation>
</comment>
<comment type="miscellaneous">
    <text evidence="1">Heme 1 (or BL or b562) is low-potential and absorbs at about 562 nm, and heme 2 (or BH or b566) is high-potential and absorbs at about 566 nm.</text>
</comment>
<comment type="similarity">
    <text evidence="3 4">Belongs to the cytochrome b family.</text>
</comment>
<comment type="caution">
    <text evidence="2">The full-length protein contains only eight transmembrane helices, not nine as predicted by bioinformatics tools.</text>
</comment>
<organism>
    <name type="scientific">Falco sparverius</name>
    <name type="common">American kestrel</name>
    <dbReference type="NCBI Taxonomy" id="56350"/>
    <lineage>
        <taxon>Eukaryota</taxon>
        <taxon>Metazoa</taxon>
        <taxon>Chordata</taxon>
        <taxon>Craniata</taxon>
        <taxon>Vertebrata</taxon>
        <taxon>Euteleostomi</taxon>
        <taxon>Archelosauria</taxon>
        <taxon>Archosauria</taxon>
        <taxon>Dinosauria</taxon>
        <taxon>Saurischia</taxon>
        <taxon>Theropoda</taxon>
        <taxon>Coelurosauria</taxon>
        <taxon>Aves</taxon>
        <taxon>Neognathae</taxon>
        <taxon>Neoaves</taxon>
        <taxon>Telluraves</taxon>
        <taxon>Australaves</taxon>
        <taxon>Falconiformes</taxon>
        <taxon>Falconidae</taxon>
        <taxon>Falco</taxon>
    </lineage>
</organism>
<geneLocation type="mitochondrion"/>
<name>CYB_FALSP</name>
<protein>
    <recommendedName>
        <fullName>Cytochrome b</fullName>
    </recommendedName>
    <alternativeName>
        <fullName>Complex III subunit 3</fullName>
    </alternativeName>
    <alternativeName>
        <fullName>Complex III subunit III</fullName>
    </alternativeName>
    <alternativeName>
        <fullName>Cytochrome b-c1 complex subunit 3</fullName>
    </alternativeName>
    <alternativeName>
        <fullName>Ubiquinol-cytochrome-c reductase complex cytochrome b subunit</fullName>
    </alternativeName>
</protein>
<evidence type="ECO:0000250" key="1"/>
<evidence type="ECO:0000250" key="2">
    <source>
        <dbReference type="UniProtKB" id="P00157"/>
    </source>
</evidence>
<evidence type="ECO:0000255" key="3">
    <source>
        <dbReference type="PROSITE-ProRule" id="PRU00967"/>
    </source>
</evidence>
<evidence type="ECO:0000255" key="4">
    <source>
        <dbReference type="PROSITE-ProRule" id="PRU00968"/>
    </source>
</evidence>
<feature type="chain" id="PRO_0000060970" description="Cytochrome b">
    <location>
        <begin position="1"/>
        <end position="380"/>
    </location>
</feature>
<feature type="transmembrane region" description="Helical" evidence="2">
    <location>
        <begin position="34"/>
        <end position="54"/>
    </location>
</feature>
<feature type="transmembrane region" description="Helical" evidence="2">
    <location>
        <begin position="78"/>
        <end position="99"/>
    </location>
</feature>
<feature type="transmembrane region" description="Helical" evidence="2">
    <location>
        <begin position="114"/>
        <end position="134"/>
    </location>
</feature>
<feature type="transmembrane region" description="Helical" evidence="2">
    <location>
        <begin position="179"/>
        <end position="199"/>
    </location>
</feature>
<feature type="transmembrane region" description="Helical" evidence="2">
    <location>
        <begin position="227"/>
        <end position="247"/>
    </location>
</feature>
<feature type="transmembrane region" description="Helical" evidence="2">
    <location>
        <begin position="289"/>
        <end position="309"/>
    </location>
</feature>
<feature type="transmembrane region" description="Helical" evidence="2">
    <location>
        <begin position="321"/>
        <end position="341"/>
    </location>
</feature>
<feature type="transmembrane region" description="Helical" evidence="2">
    <location>
        <begin position="348"/>
        <end position="368"/>
    </location>
</feature>
<feature type="binding site" description="axial binding residue" evidence="2">
    <location>
        <position position="84"/>
    </location>
    <ligand>
        <name>heme b</name>
        <dbReference type="ChEBI" id="CHEBI:60344"/>
        <label>b562</label>
    </ligand>
    <ligandPart>
        <name>Fe</name>
        <dbReference type="ChEBI" id="CHEBI:18248"/>
    </ligandPart>
</feature>
<feature type="binding site" description="axial binding residue" evidence="2">
    <location>
        <position position="98"/>
    </location>
    <ligand>
        <name>heme b</name>
        <dbReference type="ChEBI" id="CHEBI:60344"/>
        <label>b566</label>
    </ligand>
    <ligandPart>
        <name>Fe</name>
        <dbReference type="ChEBI" id="CHEBI:18248"/>
    </ligandPart>
</feature>
<feature type="binding site" description="axial binding residue" evidence="2">
    <location>
        <position position="183"/>
    </location>
    <ligand>
        <name>heme b</name>
        <dbReference type="ChEBI" id="CHEBI:60344"/>
        <label>b562</label>
    </ligand>
    <ligandPart>
        <name>Fe</name>
        <dbReference type="ChEBI" id="CHEBI:18248"/>
    </ligandPart>
</feature>
<feature type="binding site" description="axial binding residue" evidence="2">
    <location>
        <position position="197"/>
    </location>
    <ligand>
        <name>heme b</name>
        <dbReference type="ChEBI" id="CHEBI:60344"/>
        <label>b566</label>
    </ligand>
    <ligandPart>
        <name>Fe</name>
        <dbReference type="ChEBI" id="CHEBI:18248"/>
    </ligandPart>
</feature>
<feature type="binding site" evidence="2">
    <location>
        <position position="202"/>
    </location>
    <ligand>
        <name>a ubiquinone</name>
        <dbReference type="ChEBI" id="CHEBI:16389"/>
    </ligand>
</feature>
<gene>
    <name type="primary">MT-CYB</name>
    <name type="synonym">COB</name>
    <name type="synonym">CYTB</name>
    <name type="synonym">MTCYB</name>
</gene>
<keyword id="KW-0249">Electron transport</keyword>
<keyword id="KW-0349">Heme</keyword>
<keyword id="KW-0408">Iron</keyword>
<keyword id="KW-0472">Membrane</keyword>
<keyword id="KW-0479">Metal-binding</keyword>
<keyword id="KW-0496">Mitochondrion</keyword>
<keyword id="KW-0999">Mitochondrion inner membrane</keyword>
<keyword id="KW-0679">Respiratory chain</keyword>
<keyword id="KW-0812">Transmembrane</keyword>
<keyword id="KW-1133">Transmembrane helix</keyword>
<keyword id="KW-0813">Transport</keyword>
<keyword id="KW-0830">Ubiquinone</keyword>
<accession>O21167</accession>
<sequence>MAPNIRKSHPLMKMINNSLIDLPTPPNISMWWNFGSLLGVCLATQILTGLLLAMHYTADTTLAFSSVAHTCRNVQYGWLIRNLHANGASLFFICIYMHIGRGIYYGSYLYKETWNTGIILLLTLMATAFVGYVLPWGQMSFWGATVITNLFSAIPYIGQTLVEWAWGGFSVDNPTLTRFFALHFLLPFLIAGLTLIHLTFLHESGSNNPLGVTSNCDKIPFHPYYSLKDLLGFMLMLLPLMALALFTPNLLGDPENFTPANPLVTPPHIKPEWYFLFAYAILRSIPNKLGGVLALAASVLILFLSPLLHKSKQRTMTFRPLSQSLFWLLVTNLLILTWVGSQPVEHPFIIIGQLASLSYFTILLILFPLAGALENKILNY</sequence>
<dbReference type="EMBL" id="U83306">
    <property type="protein sequence ID" value="AAC60234.1"/>
    <property type="molecule type" value="Genomic_DNA"/>
</dbReference>
<dbReference type="SMR" id="O21167"/>
<dbReference type="GO" id="GO:0005743">
    <property type="term" value="C:mitochondrial inner membrane"/>
    <property type="evidence" value="ECO:0007669"/>
    <property type="project" value="UniProtKB-SubCell"/>
</dbReference>
<dbReference type="GO" id="GO:0045275">
    <property type="term" value="C:respiratory chain complex III"/>
    <property type="evidence" value="ECO:0007669"/>
    <property type="project" value="InterPro"/>
</dbReference>
<dbReference type="GO" id="GO:0046872">
    <property type="term" value="F:metal ion binding"/>
    <property type="evidence" value="ECO:0007669"/>
    <property type="project" value="UniProtKB-KW"/>
</dbReference>
<dbReference type="GO" id="GO:0008121">
    <property type="term" value="F:ubiquinol-cytochrome-c reductase activity"/>
    <property type="evidence" value="ECO:0007669"/>
    <property type="project" value="InterPro"/>
</dbReference>
<dbReference type="GO" id="GO:0006122">
    <property type="term" value="P:mitochondrial electron transport, ubiquinol to cytochrome c"/>
    <property type="evidence" value="ECO:0007669"/>
    <property type="project" value="TreeGrafter"/>
</dbReference>
<dbReference type="CDD" id="cd00290">
    <property type="entry name" value="cytochrome_b_C"/>
    <property type="match status" value="1"/>
</dbReference>
<dbReference type="CDD" id="cd00284">
    <property type="entry name" value="Cytochrome_b_N"/>
    <property type="match status" value="1"/>
</dbReference>
<dbReference type="FunFam" id="1.20.810.10:FF:000002">
    <property type="entry name" value="Cytochrome b"/>
    <property type="match status" value="1"/>
</dbReference>
<dbReference type="Gene3D" id="1.20.810.10">
    <property type="entry name" value="Cytochrome Bc1 Complex, Chain C"/>
    <property type="match status" value="1"/>
</dbReference>
<dbReference type="InterPro" id="IPR005798">
    <property type="entry name" value="Cyt_b/b6_C"/>
</dbReference>
<dbReference type="InterPro" id="IPR036150">
    <property type="entry name" value="Cyt_b/b6_C_sf"/>
</dbReference>
<dbReference type="InterPro" id="IPR005797">
    <property type="entry name" value="Cyt_b/b6_N"/>
</dbReference>
<dbReference type="InterPro" id="IPR027387">
    <property type="entry name" value="Cytb/b6-like_sf"/>
</dbReference>
<dbReference type="InterPro" id="IPR030689">
    <property type="entry name" value="Cytochrome_b"/>
</dbReference>
<dbReference type="InterPro" id="IPR048260">
    <property type="entry name" value="Cytochrome_b_C_euk/bac"/>
</dbReference>
<dbReference type="InterPro" id="IPR048259">
    <property type="entry name" value="Cytochrome_b_N_euk/bac"/>
</dbReference>
<dbReference type="InterPro" id="IPR016174">
    <property type="entry name" value="Di-haem_cyt_TM"/>
</dbReference>
<dbReference type="PANTHER" id="PTHR19271">
    <property type="entry name" value="CYTOCHROME B"/>
    <property type="match status" value="1"/>
</dbReference>
<dbReference type="PANTHER" id="PTHR19271:SF16">
    <property type="entry name" value="CYTOCHROME B"/>
    <property type="match status" value="1"/>
</dbReference>
<dbReference type="Pfam" id="PF00032">
    <property type="entry name" value="Cytochrom_B_C"/>
    <property type="match status" value="1"/>
</dbReference>
<dbReference type="Pfam" id="PF00033">
    <property type="entry name" value="Cytochrome_B"/>
    <property type="match status" value="1"/>
</dbReference>
<dbReference type="PIRSF" id="PIRSF038885">
    <property type="entry name" value="COB"/>
    <property type="match status" value="1"/>
</dbReference>
<dbReference type="SUPFAM" id="SSF81648">
    <property type="entry name" value="a domain/subunit of cytochrome bc1 complex (Ubiquinol-cytochrome c reductase)"/>
    <property type="match status" value="1"/>
</dbReference>
<dbReference type="SUPFAM" id="SSF81342">
    <property type="entry name" value="Transmembrane di-heme cytochromes"/>
    <property type="match status" value="1"/>
</dbReference>
<dbReference type="PROSITE" id="PS51003">
    <property type="entry name" value="CYTB_CTER"/>
    <property type="match status" value="1"/>
</dbReference>
<dbReference type="PROSITE" id="PS51002">
    <property type="entry name" value="CYTB_NTER"/>
    <property type="match status" value="1"/>
</dbReference>
<reference key="1">
    <citation type="journal article" date="1997" name="Mol. Phylogenet. Evol.">
        <title>Correlation of functional domains and rates of nucleotide substitution in cytochrome b.</title>
        <authorList>
            <person name="Griffiths C.S."/>
        </authorList>
    </citation>
    <scope>NUCLEOTIDE SEQUENCE [GENOMIC DNA]</scope>
</reference>